<organism>
    <name type="scientific">Homo sapiens</name>
    <name type="common">Human</name>
    <dbReference type="NCBI Taxonomy" id="9606"/>
    <lineage>
        <taxon>Eukaryota</taxon>
        <taxon>Metazoa</taxon>
        <taxon>Chordata</taxon>
        <taxon>Craniata</taxon>
        <taxon>Vertebrata</taxon>
        <taxon>Euteleostomi</taxon>
        <taxon>Mammalia</taxon>
        <taxon>Eutheria</taxon>
        <taxon>Euarchontoglires</taxon>
        <taxon>Primates</taxon>
        <taxon>Haplorrhini</taxon>
        <taxon>Catarrhini</taxon>
        <taxon>Hominidae</taxon>
        <taxon>Homo</taxon>
    </lineage>
</organism>
<keyword id="KW-0002">3D-structure</keyword>
<keyword id="KW-0963">Cytoplasm</keyword>
<keyword id="KW-1024">Diamond-Blackfan anemia</keyword>
<keyword id="KW-0903">Direct protein sequencing</keyword>
<keyword id="KW-0479">Metal-binding</keyword>
<keyword id="KW-0539">Nucleus</keyword>
<keyword id="KW-0597">Phosphoprotein</keyword>
<keyword id="KW-1267">Proteomics identification</keyword>
<keyword id="KW-1185">Reference proteome</keyword>
<keyword id="KW-0687">Ribonucleoprotein</keyword>
<keyword id="KW-0689">Ribosomal protein</keyword>
<keyword id="KW-0862">Zinc</keyword>
<keyword id="KW-0863">Zinc-finger</keyword>
<dbReference type="EMBL" id="L19739">
    <property type="protein sequence ID" value="AAA59867.1"/>
    <property type="molecule type" value="mRNA"/>
</dbReference>
<dbReference type="EMBL" id="U57847">
    <property type="protein sequence ID" value="AAB02266.1"/>
    <property type="molecule type" value="mRNA"/>
</dbReference>
<dbReference type="EMBL" id="AB061845">
    <property type="protein sequence ID" value="BAB79483.1"/>
    <property type="molecule type" value="Genomic_DNA"/>
</dbReference>
<dbReference type="EMBL" id="AK312070">
    <property type="protein sequence ID" value="BAG35006.1"/>
    <property type="molecule type" value="mRNA"/>
</dbReference>
<dbReference type="EMBL" id="AL358472">
    <property type="status" value="NOT_ANNOTATED_CDS"/>
    <property type="molecule type" value="Genomic_DNA"/>
</dbReference>
<dbReference type="EMBL" id="CH471121">
    <property type="protein sequence ID" value="EAW53239.1"/>
    <property type="molecule type" value="Genomic_DNA"/>
</dbReference>
<dbReference type="EMBL" id="CH471055">
    <property type="protein sequence ID" value="EAW64624.1"/>
    <property type="molecule type" value="Genomic_DNA"/>
</dbReference>
<dbReference type="EMBL" id="CH471116">
    <property type="protein sequence ID" value="EAW88871.1"/>
    <property type="molecule type" value="Genomic_DNA"/>
</dbReference>
<dbReference type="EMBL" id="BC002658">
    <property type="protein sequence ID" value="AAH02658.1"/>
    <property type="molecule type" value="mRNA"/>
</dbReference>
<dbReference type="EMBL" id="BC070219">
    <property type="protein sequence ID" value="AAH70219.1"/>
    <property type="molecule type" value="mRNA"/>
</dbReference>
<dbReference type="EMBL" id="AB007162">
    <property type="protein sequence ID" value="BAA25825.1"/>
    <property type="molecule type" value="Genomic_DNA"/>
</dbReference>
<dbReference type="CCDS" id="CCDS1059.1"/>
<dbReference type="PIR" id="A48045">
    <property type="entry name" value="A48045"/>
</dbReference>
<dbReference type="RefSeq" id="NP_001021.1">
    <property type="nucleotide sequence ID" value="NM_001030.6"/>
</dbReference>
<dbReference type="PDB" id="4UG0">
    <property type="method" value="EM"/>
    <property type="chains" value="Sb=1-84"/>
</dbReference>
<dbReference type="PDB" id="4V6X">
    <property type="method" value="EM"/>
    <property type="resolution" value="5.00 A"/>
    <property type="chains" value="Ab=1-84"/>
</dbReference>
<dbReference type="PDB" id="5A2Q">
    <property type="method" value="EM"/>
    <property type="resolution" value="3.90 A"/>
    <property type="chains" value="b=2-83"/>
</dbReference>
<dbReference type="PDB" id="5AJ0">
    <property type="method" value="EM"/>
    <property type="resolution" value="3.50 A"/>
    <property type="chains" value="Bb=1-84"/>
</dbReference>
<dbReference type="PDB" id="5FLX">
    <property type="method" value="EM"/>
    <property type="resolution" value="3.90 A"/>
    <property type="chains" value="b=1-84"/>
</dbReference>
<dbReference type="PDB" id="5LKS">
    <property type="method" value="EM"/>
    <property type="resolution" value="3.60 A"/>
    <property type="chains" value="Sb=1-84"/>
</dbReference>
<dbReference type="PDB" id="5OA3">
    <property type="method" value="EM"/>
    <property type="resolution" value="4.30 A"/>
    <property type="chains" value="b=2-83"/>
</dbReference>
<dbReference type="PDB" id="5T2C">
    <property type="method" value="EM"/>
    <property type="resolution" value="3.60 A"/>
    <property type="chains" value="AV=1-84"/>
</dbReference>
<dbReference type="PDB" id="5VYC">
    <property type="method" value="X-ray"/>
    <property type="resolution" value="6.00 A"/>
    <property type="chains" value="b1/b2/b3/b4/b5/b6=1-84"/>
</dbReference>
<dbReference type="PDB" id="6FEC">
    <property type="method" value="EM"/>
    <property type="resolution" value="6.30 A"/>
    <property type="chains" value="Y=1-84"/>
</dbReference>
<dbReference type="PDB" id="6G18">
    <property type="method" value="EM"/>
    <property type="resolution" value="3.60 A"/>
    <property type="chains" value="b=1-84"/>
</dbReference>
<dbReference type="PDB" id="6G4S">
    <property type="method" value="EM"/>
    <property type="resolution" value="4.00 A"/>
    <property type="chains" value="b=1-84"/>
</dbReference>
<dbReference type="PDB" id="6G4W">
    <property type="method" value="EM"/>
    <property type="resolution" value="4.50 A"/>
    <property type="chains" value="b=1-84"/>
</dbReference>
<dbReference type="PDB" id="6G51">
    <property type="method" value="EM"/>
    <property type="resolution" value="4.10 A"/>
    <property type="chains" value="b=1-84"/>
</dbReference>
<dbReference type="PDB" id="6G53">
    <property type="method" value="EM"/>
    <property type="resolution" value="4.50 A"/>
    <property type="chains" value="b=1-84"/>
</dbReference>
<dbReference type="PDB" id="6G5H">
    <property type="method" value="EM"/>
    <property type="resolution" value="3.60 A"/>
    <property type="chains" value="b=1-84"/>
</dbReference>
<dbReference type="PDB" id="6G5I">
    <property type="method" value="EM"/>
    <property type="resolution" value="3.50 A"/>
    <property type="chains" value="b=1-84"/>
</dbReference>
<dbReference type="PDB" id="6IP5">
    <property type="method" value="EM"/>
    <property type="resolution" value="3.90 A"/>
    <property type="chains" value="3P=1-84"/>
</dbReference>
<dbReference type="PDB" id="6IP6">
    <property type="method" value="EM"/>
    <property type="resolution" value="4.50 A"/>
    <property type="chains" value="3P=1-84"/>
</dbReference>
<dbReference type="PDB" id="6IP8">
    <property type="method" value="EM"/>
    <property type="resolution" value="3.90 A"/>
    <property type="chains" value="3P=1-84"/>
</dbReference>
<dbReference type="PDB" id="6OLE">
    <property type="method" value="EM"/>
    <property type="resolution" value="3.10 A"/>
    <property type="chains" value="Sb=2-83"/>
</dbReference>
<dbReference type="PDB" id="6OLF">
    <property type="method" value="EM"/>
    <property type="resolution" value="3.90 A"/>
    <property type="chains" value="Sb=2-83"/>
</dbReference>
<dbReference type="PDB" id="6OLG">
    <property type="method" value="EM"/>
    <property type="resolution" value="3.40 A"/>
    <property type="chains" value="Bb=4-83"/>
</dbReference>
<dbReference type="PDB" id="6OLI">
    <property type="method" value="EM"/>
    <property type="resolution" value="3.50 A"/>
    <property type="chains" value="Sb=2-83"/>
</dbReference>
<dbReference type="PDB" id="6OLZ">
    <property type="method" value="EM"/>
    <property type="resolution" value="3.90 A"/>
    <property type="chains" value="Bb=4-83"/>
</dbReference>
<dbReference type="PDB" id="6OM0">
    <property type="method" value="EM"/>
    <property type="resolution" value="3.10 A"/>
    <property type="chains" value="Sb=2-83"/>
</dbReference>
<dbReference type="PDB" id="6OM7">
    <property type="method" value="EM"/>
    <property type="resolution" value="3.70 A"/>
    <property type="chains" value="Sb=2-83"/>
</dbReference>
<dbReference type="PDB" id="6QZP">
    <property type="method" value="EM"/>
    <property type="resolution" value="2.90 A"/>
    <property type="chains" value="Sb=2-84"/>
</dbReference>
<dbReference type="PDB" id="6XA1">
    <property type="method" value="EM"/>
    <property type="resolution" value="2.80 A"/>
    <property type="chains" value="Sb=2-83"/>
</dbReference>
<dbReference type="PDB" id="6Y0G">
    <property type="method" value="EM"/>
    <property type="resolution" value="3.20 A"/>
    <property type="chains" value="Sb=1-84"/>
</dbReference>
<dbReference type="PDB" id="6Y2L">
    <property type="method" value="EM"/>
    <property type="resolution" value="3.00 A"/>
    <property type="chains" value="Sb=1-84"/>
</dbReference>
<dbReference type="PDB" id="6Y57">
    <property type="method" value="EM"/>
    <property type="resolution" value="3.50 A"/>
    <property type="chains" value="Sb=1-84"/>
</dbReference>
<dbReference type="PDB" id="6YBD">
    <property type="method" value="EM"/>
    <property type="resolution" value="3.30 A"/>
    <property type="chains" value="H=1-84"/>
</dbReference>
<dbReference type="PDB" id="6YBW">
    <property type="method" value="EM"/>
    <property type="resolution" value="3.10 A"/>
    <property type="chains" value="H=1-84"/>
</dbReference>
<dbReference type="PDB" id="6Z6L">
    <property type="method" value="EM"/>
    <property type="resolution" value="3.00 A"/>
    <property type="chains" value="Sb=1-84"/>
</dbReference>
<dbReference type="PDB" id="6Z6M">
    <property type="method" value="EM"/>
    <property type="resolution" value="3.10 A"/>
    <property type="chains" value="Sb=1-84"/>
</dbReference>
<dbReference type="PDB" id="6Z6N">
    <property type="method" value="EM"/>
    <property type="resolution" value="2.90 A"/>
    <property type="chains" value="Sb=1-84"/>
</dbReference>
<dbReference type="PDB" id="6ZLW">
    <property type="method" value="EM"/>
    <property type="resolution" value="2.60 A"/>
    <property type="chains" value="b=1-84"/>
</dbReference>
<dbReference type="PDB" id="6ZM7">
    <property type="method" value="EM"/>
    <property type="resolution" value="2.70 A"/>
    <property type="chains" value="Sb=1-84"/>
</dbReference>
<dbReference type="PDB" id="6ZME">
    <property type="method" value="EM"/>
    <property type="resolution" value="3.00 A"/>
    <property type="chains" value="Sb=1-84"/>
</dbReference>
<dbReference type="PDB" id="6ZMI">
    <property type="method" value="EM"/>
    <property type="resolution" value="2.60 A"/>
    <property type="chains" value="Sb=1-84"/>
</dbReference>
<dbReference type="PDB" id="6ZMO">
    <property type="method" value="EM"/>
    <property type="resolution" value="3.10 A"/>
    <property type="chains" value="Sb=1-84"/>
</dbReference>
<dbReference type="PDB" id="6ZMT">
    <property type="method" value="EM"/>
    <property type="resolution" value="3.00 A"/>
    <property type="chains" value="b=1-84"/>
</dbReference>
<dbReference type="PDB" id="6ZMW">
    <property type="method" value="EM"/>
    <property type="resolution" value="3.70 A"/>
    <property type="chains" value="H=1-84"/>
</dbReference>
<dbReference type="PDB" id="6ZN5">
    <property type="method" value="EM"/>
    <property type="resolution" value="3.20 A"/>
    <property type="chains" value="b=2-83"/>
</dbReference>
<dbReference type="PDB" id="6ZOJ">
    <property type="method" value="EM"/>
    <property type="resolution" value="2.80 A"/>
    <property type="chains" value="b=2-83"/>
</dbReference>
<dbReference type="PDB" id="6ZOK">
    <property type="method" value="EM"/>
    <property type="resolution" value="2.80 A"/>
    <property type="chains" value="b=2-83"/>
</dbReference>
<dbReference type="PDB" id="6ZON">
    <property type="method" value="EM"/>
    <property type="resolution" value="3.00 A"/>
    <property type="chains" value="R=1-84"/>
</dbReference>
<dbReference type="PDB" id="6ZP4">
    <property type="method" value="EM"/>
    <property type="resolution" value="2.90 A"/>
    <property type="chains" value="R=1-84"/>
</dbReference>
<dbReference type="PDB" id="6ZUO">
    <property type="method" value="EM"/>
    <property type="resolution" value="3.10 A"/>
    <property type="chains" value="b=1-84"/>
</dbReference>
<dbReference type="PDB" id="6ZV6">
    <property type="method" value="EM"/>
    <property type="resolution" value="2.90 A"/>
    <property type="chains" value="b=1-84"/>
</dbReference>
<dbReference type="PDB" id="6ZVH">
    <property type="method" value="EM"/>
    <property type="resolution" value="2.90 A"/>
    <property type="chains" value="b=2-84"/>
</dbReference>
<dbReference type="PDB" id="6ZVJ">
    <property type="method" value="EM"/>
    <property type="resolution" value="3.80 A"/>
    <property type="chains" value="R=2-83"/>
</dbReference>
<dbReference type="PDB" id="6ZXD">
    <property type="method" value="EM"/>
    <property type="resolution" value="3.20 A"/>
    <property type="chains" value="b=1-84"/>
</dbReference>
<dbReference type="PDB" id="6ZXE">
    <property type="method" value="EM"/>
    <property type="resolution" value="3.00 A"/>
    <property type="chains" value="b=1-84"/>
</dbReference>
<dbReference type="PDB" id="6ZXF">
    <property type="method" value="EM"/>
    <property type="resolution" value="3.70 A"/>
    <property type="chains" value="b=1-84"/>
</dbReference>
<dbReference type="PDB" id="6ZXG">
    <property type="method" value="EM"/>
    <property type="resolution" value="2.60 A"/>
    <property type="chains" value="b=1-84"/>
</dbReference>
<dbReference type="PDB" id="6ZXH">
    <property type="method" value="EM"/>
    <property type="resolution" value="2.70 A"/>
    <property type="chains" value="b=1-84"/>
</dbReference>
<dbReference type="PDB" id="7A09">
    <property type="method" value="EM"/>
    <property type="resolution" value="3.50 A"/>
    <property type="chains" value="R=1-84"/>
</dbReference>
<dbReference type="PDB" id="7K5I">
    <property type="method" value="EM"/>
    <property type="resolution" value="2.90 A"/>
    <property type="chains" value="b=1-84"/>
</dbReference>
<dbReference type="PDB" id="7MQ8">
    <property type="method" value="EM"/>
    <property type="resolution" value="3.60 A"/>
    <property type="chains" value="NQ=1-84"/>
</dbReference>
<dbReference type="PDB" id="7MQ9">
    <property type="method" value="EM"/>
    <property type="resolution" value="3.87 A"/>
    <property type="chains" value="NQ=1-84"/>
</dbReference>
<dbReference type="PDB" id="7MQA">
    <property type="method" value="EM"/>
    <property type="resolution" value="2.70 A"/>
    <property type="chains" value="NQ=1-84"/>
</dbReference>
<dbReference type="PDB" id="7QP6">
    <property type="method" value="EM"/>
    <property type="resolution" value="4.70 A"/>
    <property type="chains" value="H=1-84"/>
</dbReference>
<dbReference type="PDB" id="7QP7">
    <property type="method" value="EM"/>
    <property type="resolution" value="3.70 A"/>
    <property type="chains" value="H=1-84"/>
</dbReference>
<dbReference type="PDB" id="7R4X">
    <property type="method" value="EM"/>
    <property type="resolution" value="2.15 A"/>
    <property type="chains" value="b=1-84"/>
</dbReference>
<dbReference type="PDB" id="7TQL">
    <property type="method" value="EM"/>
    <property type="resolution" value="3.40 A"/>
    <property type="chains" value="b=2-83"/>
</dbReference>
<dbReference type="PDB" id="7WTS">
    <property type="method" value="EM"/>
    <property type="resolution" value="3.20 A"/>
    <property type="chains" value="b=1-84"/>
</dbReference>
<dbReference type="PDB" id="7WTT">
    <property type="method" value="EM"/>
    <property type="resolution" value="3.10 A"/>
    <property type="chains" value="b=1-84"/>
</dbReference>
<dbReference type="PDB" id="7WTU">
    <property type="method" value="EM"/>
    <property type="resolution" value="3.00 A"/>
    <property type="chains" value="b=1-84"/>
</dbReference>
<dbReference type="PDB" id="7WTV">
    <property type="method" value="EM"/>
    <property type="resolution" value="3.50 A"/>
    <property type="chains" value="b=1-84"/>
</dbReference>
<dbReference type="PDB" id="7WTW">
    <property type="method" value="EM"/>
    <property type="resolution" value="3.20 A"/>
    <property type="chains" value="b=1-84"/>
</dbReference>
<dbReference type="PDB" id="7WTX">
    <property type="method" value="EM"/>
    <property type="resolution" value="3.10 A"/>
    <property type="chains" value="b=1-84"/>
</dbReference>
<dbReference type="PDB" id="7WTZ">
    <property type="method" value="EM"/>
    <property type="resolution" value="3.00 A"/>
    <property type="chains" value="b=1-84"/>
</dbReference>
<dbReference type="PDB" id="7WU0">
    <property type="method" value="EM"/>
    <property type="resolution" value="3.30 A"/>
    <property type="chains" value="b=1-84"/>
</dbReference>
<dbReference type="PDB" id="7XNX">
    <property type="method" value="EM"/>
    <property type="resolution" value="2.70 A"/>
    <property type="chains" value="Sb=1-84"/>
</dbReference>
<dbReference type="PDB" id="7XNY">
    <property type="method" value="EM"/>
    <property type="resolution" value="2.50 A"/>
    <property type="chains" value="Sb=1-84"/>
</dbReference>
<dbReference type="PDB" id="8G5Y">
    <property type="method" value="EM"/>
    <property type="resolution" value="2.29 A"/>
    <property type="chains" value="Sb=1-84"/>
</dbReference>
<dbReference type="PDB" id="8G60">
    <property type="method" value="EM"/>
    <property type="resolution" value="2.54 A"/>
    <property type="chains" value="Sb=1-84"/>
</dbReference>
<dbReference type="PDB" id="8G61">
    <property type="method" value="EM"/>
    <property type="resolution" value="2.94 A"/>
    <property type="chains" value="Sb=1-84"/>
</dbReference>
<dbReference type="PDB" id="8G6J">
    <property type="method" value="EM"/>
    <property type="resolution" value="2.80 A"/>
    <property type="chains" value="Sb=1-84"/>
</dbReference>
<dbReference type="PDB" id="8GLP">
    <property type="method" value="EM"/>
    <property type="resolution" value="1.67 A"/>
    <property type="chains" value="Sb=1-84"/>
</dbReference>
<dbReference type="PDB" id="8IFD">
    <property type="method" value="EM"/>
    <property type="resolution" value="2.59 A"/>
    <property type="chains" value="3P=1-84"/>
</dbReference>
<dbReference type="PDB" id="8IFE">
    <property type="method" value="EM"/>
    <property type="resolution" value="2.57 A"/>
    <property type="chains" value="3P=1-84"/>
</dbReference>
<dbReference type="PDB" id="8JDJ">
    <property type="method" value="EM"/>
    <property type="resolution" value="2.50 A"/>
    <property type="chains" value="AN=1-84"/>
</dbReference>
<dbReference type="PDB" id="8JDK">
    <property type="method" value="EM"/>
    <property type="resolution" value="2.26 A"/>
    <property type="chains" value="AN=1-84"/>
</dbReference>
<dbReference type="PDB" id="8JDL">
    <property type="method" value="EM"/>
    <property type="resolution" value="2.42 A"/>
    <property type="chains" value="AN=1-84"/>
</dbReference>
<dbReference type="PDB" id="8JDM">
    <property type="method" value="EM"/>
    <property type="resolution" value="2.67 A"/>
    <property type="chains" value="AN=1-84"/>
</dbReference>
<dbReference type="PDB" id="8K2C">
    <property type="method" value="EM"/>
    <property type="resolution" value="2.40 A"/>
    <property type="chains" value="Sb=1-84"/>
</dbReference>
<dbReference type="PDB" id="8OZ0">
    <property type="method" value="EM"/>
    <property type="resolution" value="3.50 A"/>
    <property type="chains" value="M=1-84"/>
</dbReference>
<dbReference type="PDB" id="8PJ1">
    <property type="method" value="EM"/>
    <property type="resolution" value="3.40 A"/>
    <property type="chains" value="H=1-84"/>
</dbReference>
<dbReference type="PDB" id="8PJ2">
    <property type="method" value="EM"/>
    <property type="resolution" value="3.40 A"/>
    <property type="chains" value="H=1-84"/>
</dbReference>
<dbReference type="PDB" id="8PJ3">
    <property type="method" value="EM"/>
    <property type="resolution" value="3.70 A"/>
    <property type="chains" value="H=1-84"/>
</dbReference>
<dbReference type="PDB" id="8PJ4">
    <property type="method" value="EM"/>
    <property type="resolution" value="3.20 A"/>
    <property type="chains" value="H=1-84"/>
</dbReference>
<dbReference type="PDB" id="8PJ5">
    <property type="method" value="EM"/>
    <property type="resolution" value="2.90 A"/>
    <property type="chains" value="H=1-84"/>
</dbReference>
<dbReference type="PDB" id="8PJ6">
    <property type="method" value="EM"/>
    <property type="resolution" value="2.90 A"/>
    <property type="chains" value="H=1-84"/>
</dbReference>
<dbReference type="PDB" id="8PPK">
    <property type="method" value="EM"/>
    <property type="resolution" value="2.98 A"/>
    <property type="chains" value="b=1-84"/>
</dbReference>
<dbReference type="PDB" id="8PPL">
    <property type="method" value="EM"/>
    <property type="resolution" value="2.65 A"/>
    <property type="chains" value="Ab=1-84"/>
</dbReference>
<dbReference type="PDB" id="8QOI">
    <property type="method" value="EM"/>
    <property type="resolution" value="1.90 A"/>
    <property type="chains" value="Sb=1-84"/>
</dbReference>
<dbReference type="PDB" id="8RG0">
    <property type="method" value="EM"/>
    <property type="resolution" value="3.40 A"/>
    <property type="chains" value="H=1-84"/>
</dbReference>
<dbReference type="PDB" id="8T4S">
    <property type="method" value="EM"/>
    <property type="resolution" value="2.60 A"/>
    <property type="chains" value="b=1-84"/>
</dbReference>
<dbReference type="PDB" id="8UKB">
    <property type="method" value="EM"/>
    <property type="resolution" value="3.05 A"/>
    <property type="chains" value="Sb=2-84"/>
</dbReference>
<dbReference type="PDB" id="8XP2">
    <property type="method" value="EM"/>
    <property type="resolution" value="3.20 A"/>
    <property type="chains" value="Sb=1-84"/>
</dbReference>
<dbReference type="PDB" id="8XP3">
    <property type="method" value="EM"/>
    <property type="resolution" value="3.40 A"/>
    <property type="chains" value="Sb=1-84"/>
</dbReference>
<dbReference type="PDB" id="8XSX">
    <property type="method" value="EM"/>
    <property type="resolution" value="2.40 A"/>
    <property type="chains" value="Sb=1-84"/>
</dbReference>
<dbReference type="PDB" id="8XSY">
    <property type="method" value="EM"/>
    <property type="resolution" value="3.00 A"/>
    <property type="chains" value="Sb=1-84"/>
</dbReference>
<dbReference type="PDB" id="8XSZ">
    <property type="method" value="EM"/>
    <property type="resolution" value="3.20 A"/>
    <property type="chains" value="Sb=1-84"/>
</dbReference>
<dbReference type="PDB" id="8XXL">
    <property type="method" value="EM"/>
    <property type="resolution" value="2.90 A"/>
    <property type="chains" value="Sb=1-84"/>
</dbReference>
<dbReference type="PDB" id="8XXM">
    <property type="method" value="EM"/>
    <property type="resolution" value="3.20 A"/>
    <property type="chains" value="Sb=1-84"/>
</dbReference>
<dbReference type="PDB" id="8XXN">
    <property type="method" value="EM"/>
    <property type="resolution" value="3.60 A"/>
    <property type="chains" value="Sb=1-84"/>
</dbReference>
<dbReference type="PDB" id="8Y0W">
    <property type="method" value="EM"/>
    <property type="resolution" value="3.40 A"/>
    <property type="chains" value="Sb=1-84"/>
</dbReference>
<dbReference type="PDB" id="8Y0X">
    <property type="method" value="EM"/>
    <property type="resolution" value="3.30 A"/>
    <property type="chains" value="Sb=1-84"/>
</dbReference>
<dbReference type="PDB" id="8YOO">
    <property type="method" value="EM"/>
    <property type="resolution" value="2.00 A"/>
    <property type="chains" value="Sb=1-84"/>
</dbReference>
<dbReference type="PDB" id="8YOP">
    <property type="method" value="EM"/>
    <property type="resolution" value="2.20 A"/>
    <property type="chains" value="Sb=1-84"/>
</dbReference>
<dbReference type="PDB" id="8ZDB">
    <property type="method" value="EM"/>
    <property type="resolution" value="3.60 A"/>
    <property type="chains" value="b=1-84"/>
</dbReference>
<dbReference type="PDB" id="8ZDC">
    <property type="method" value="EM"/>
    <property type="resolution" value="3.80 A"/>
    <property type="chains" value="b=1-84"/>
</dbReference>
<dbReference type="PDB" id="8ZDD">
    <property type="method" value="EM"/>
    <property type="resolution" value="3.70 A"/>
    <property type="chains" value="b=1-84"/>
</dbReference>
<dbReference type="PDB" id="9BKD">
    <property type="method" value="EM"/>
    <property type="resolution" value="2.60 A"/>
    <property type="chains" value="H=1-84"/>
</dbReference>
<dbReference type="PDB" id="9BLN">
    <property type="method" value="EM"/>
    <property type="resolution" value="3.90 A"/>
    <property type="chains" value="H=1-84"/>
</dbReference>
<dbReference type="PDB" id="9C3H">
    <property type="method" value="EM"/>
    <property type="resolution" value="2.00 A"/>
    <property type="chains" value="Sb=1-84"/>
</dbReference>
<dbReference type="PDB" id="9G8M">
    <property type="method" value="EM"/>
    <property type="resolution" value="3.30 A"/>
    <property type="chains" value="Sb=1-84"/>
</dbReference>
<dbReference type="PDB" id="9G8O">
    <property type="method" value="EM"/>
    <property type="resolution" value="3.40 A"/>
    <property type="chains" value="Sb=1-84"/>
</dbReference>
<dbReference type="PDBsum" id="4UG0"/>
<dbReference type="PDBsum" id="4V6X"/>
<dbReference type="PDBsum" id="5A2Q"/>
<dbReference type="PDBsum" id="5AJ0"/>
<dbReference type="PDBsum" id="5FLX"/>
<dbReference type="PDBsum" id="5LKS"/>
<dbReference type="PDBsum" id="5OA3"/>
<dbReference type="PDBsum" id="5T2C"/>
<dbReference type="PDBsum" id="5VYC"/>
<dbReference type="PDBsum" id="6FEC"/>
<dbReference type="PDBsum" id="6G18"/>
<dbReference type="PDBsum" id="6G4S"/>
<dbReference type="PDBsum" id="6G4W"/>
<dbReference type="PDBsum" id="6G51"/>
<dbReference type="PDBsum" id="6G53"/>
<dbReference type="PDBsum" id="6G5H"/>
<dbReference type="PDBsum" id="6G5I"/>
<dbReference type="PDBsum" id="6IP5"/>
<dbReference type="PDBsum" id="6IP6"/>
<dbReference type="PDBsum" id="6IP8"/>
<dbReference type="PDBsum" id="6OLE"/>
<dbReference type="PDBsum" id="6OLF"/>
<dbReference type="PDBsum" id="6OLG"/>
<dbReference type="PDBsum" id="6OLI"/>
<dbReference type="PDBsum" id="6OLZ"/>
<dbReference type="PDBsum" id="6OM0"/>
<dbReference type="PDBsum" id="6OM7"/>
<dbReference type="PDBsum" id="6QZP"/>
<dbReference type="PDBsum" id="6XA1"/>
<dbReference type="PDBsum" id="6Y0G"/>
<dbReference type="PDBsum" id="6Y2L"/>
<dbReference type="PDBsum" id="6Y57"/>
<dbReference type="PDBsum" id="6YBD"/>
<dbReference type="PDBsum" id="6YBW"/>
<dbReference type="PDBsum" id="6Z6L"/>
<dbReference type="PDBsum" id="6Z6M"/>
<dbReference type="PDBsum" id="6Z6N"/>
<dbReference type="PDBsum" id="6ZLW"/>
<dbReference type="PDBsum" id="6ZM7"/>
<dbReference type="PDBsum" id="6ZME"/>
<dbReference type="PDBsum" id="6ZMI"/>
<dbReference type="PDBsum" id="6ZMO"/>
<dbReference type="PDBsum" id="6ZMT"/>
<dbReference type="PDBsum" id="6ZMW"/>
<dbReference type="PDBsum" id="6ZN5"/>
<dbReference type="PDBsum" id="6ZOJ"/>
<dbReference type="PDBsum" id="6ZOK"/>
<dbReference type="PDBsum" id="6ZON"/>
<dbReference type="PDBsum" id="6ZP4"/>
<dbReference type="PDBsum" id="6ZUO"/>
<dbReference type="PDBsum" id="6ZV6"/>
<dbReference type="PDBsum" id="6ZVH"/>
<dbReference type="PDBsum" id="6ZVJ"/>
<dbReference type="PDBsum" id="6ZXD"/>
<dbReference type="PDBsum" id="6ZXE"/>
<dbReference type="PDBsum" id="6ZXF"/>
<dbReference type="PDBsum" id="6ZXG"/>
<dbReference type="PDBsum" id="6ZXH"/>
<dbReference type="PDBsum" id="7A09"/>
<dbReference type="PDBsum" id="7K5I"/>
<dbReference type="PDBsum" id="7MQ8"/>
<dbReference type="PDBsum" id="7MQ9"/>
<dbReference type="PDBsum" id="7MQA"/>
<dbReference type="PDBsum" id="7QP6"/>
<dbReference type="PDBsum" id="7QP7"/>
<dbReference type="PDBsum" id="7R4X"/>
<dbReference type="PDBsum" id="7TQL"/>
<dbReference type="PDBsum" id="7WTS"/>
<dbReference type="PDBsum" id="7WTT"/>
<dbReference type="PDBsum" id="7WTU"/>
<dbReference type="PDBsum" id="7WTV"/>
<dbReference type="PDBsum" id="7WTW"/>
<dbReference type="PDBsum" id="7WTX"/>
<dbReference type="PDBsum" id="7WTZ"/>
<dbReference type="PDBsum" id="7WU0"/>
<dbReference type="PDBsum" id="7XNX"/>
<dbReference type="PDBsum" id="7XNY"/>
<dbReference type="PDBsum" id="8G5Y"/>
<dbReference type="PDBsum" id="8G60"/>
<dbReference type="PDBsum" id="8G61"/>
<dbReference type="PDBsum" id="8G6J"/>
<dbReference type="PDBsum" id="8GLP"/>
<dbReference type="PDBsum" id="8IFD"/>
<dbReference type="PDBsum" id="8IFE"/>
<dbReference type="PDBsum" id="8JDJ"/>
<dbReference type="PDBsum" id="8JDK"/>
<dbReference type="PDBsum" id="8JDL"/>
<dbReference type="PDBsum" id="8JDM"/>
<dbReference type="PDBsum" id="8K2C"/>
<dbReference type="PDBsum" id="8OZ0"/>
<dbReference type="PDBsum" id="8PJ1"/>
<dbReference type="PDBsum" id="8PJ2"/>
<dbReference type="PDBsum" id="8PJ3"/>
<dbReference type="PDBsum" id="8PJ4"/>
<dbReference type="PDBsum" id="8PJ5"/>
<dbReference type="PDBsum" id="8PJ6"/>
<dbReference type="PDBsum" id="8PPK"/>
<dbReference type="PDBsum" id="8PPL"/>
<dbReference type="PDBsum" id="8QOI"/>
<dbReference type="PDBsum" id="8RG0"/>
<dbReference type="PDBsum" id="8T4S"/>
<dbReference type="PDBsum" id="8UKB"/>
<dbReference type="PDBsum" id="8XP2"/>
<dbReference type="PDBsum" id="8XP3"/>
<dbReference type="PDBsum" id="8XSX"/>
<dbReference type="PDBsum" id="8XSY"/>
<dbReference type="PDBsum" id="8XSZ"/>
<dbReference type="PDBsum" id="8XXL"/>
<dbReference type="PDBsum" id="8XXM"/>
<dbReference type="PDBsum" id="8XXN"/>
<dbReference type="PDBsum" id="8Y0W"/>
<dbReference type="PDBsum" id="8Y0X"/>
<dbReference type="PDBsum" id="8YOO"/>
<dbReference type="PDBsum" id="8YOP"/>
<dbReference type="PDBsum" id="8ZDB"/>
<dbReference type="PDBsum" id="8ZDC"/>
<dbReference type="PDBsum" id="8ZDD"/>
<dbReference type="PDBsum" id="9BKD"/>
<dbReference type="PDBsum" id="9BLN"/>
<dbReference type="PDBsum" id="9C3H"/>
<dbReference type="PDBsum" id="9G8M"/>
<dbReference type="PDBsum" id="9G8O"/>
<dbReference type="EMDB" id="EMD-10668"/>
<dbReference type="EMDB" id="EMD-10674"/>
<dbReference type="EMDB" id="EMD-10690"/>
<dbReference type="EMDB" id="EMD-10769"/>
<dbReference type="EMDB" id="EMD-10775"/>
<dbReference type="EMDB" id="EMD-11098"/>
<dbReference type="EMDB" id="EMD-11099"/>
<dbReference type="EMDB" id="EMD-11100"/>
<dbReference type="EMDB" id="EMD-11276"/>
<dbReference type="EMDB" id="EMD-11288"/>
<dbReference type="EMDB" id="EMD-11289"/>
<dbReference type="EMDB" id="EMD-11292"/>
<dbReference type="EMDB" id="EMD-11299"/>
<dbReference type="EMDB" id="EMD-11301"/>
<dbReference type="EMDB" id="EMD-11302"/>
<dbReference type="EMDB" id="EMD-11310"/>
<dbReference type="EMDB" id="EMD-11320"/>
<dbReference type="EMDB" id="EMD-11321"/>
<dbReference type="EMDB" id="EMD-11325"/>
<dbReference type="EMDB" id="EMD-11335"/>
<dbReference type="EMDB" id="EMD-11440"/>
<dbReference type="EMDB" id="EMD-11441"/>
<dbReference type="EMDB" id="EMD-11456"/>
<dbReference type="EMDB" id="EMD-11458"/>
<dbReference type="EMDB" id="EMD-11517"/>
<dbReference type="EMDB" id="EMD-11518"/>
<dbReference type="EMDB" id="EMD-11519"/>
<dbReference type="EMDB" id="EMD-11520"/>
<dbReference type="EMDB" id="EMD-11521"/>
<dbReference type="EMDB" id="EMD-11602"/>
<dbReference type="EMDB" id="EMD-14113"/>
<dbReference type="EMDB" id="EMD-14114"/>
<dbReference type="EMDB" id="EMD-14317"/>
<dbReference type="EMDB" id="EMD-17297"/>
<dbReference type="EMDB" id="EMD-17696"/>
<dbReference type="EMDB" id="EMD-17697"/>
<dbReference type="EMDB" id="EMD-17698"/>
<dbReference type="EMDB" id="EMD-17699"/>
<dbReference type="EMDB" id="EMD-17700"/>
<dbReference type="EMDB" id="EMD-17701"/>
<dbReference type="EMDB" id="EMD-17804"/>
<dbReference type="EMDB" id="EMD-17805"/>
<dbReference type="EMDB" id="EMD-18539"/>
<dbReference type="EMDB" id="EMD-19128"/>
<dbReference type="EMDB" id="EMD-22681"/>
<dbReference type="EMDB" id="EMD-23936"/>
<dbReference type="EMDB" id="EMD-23937"/>
<dbReference type="EMDB" id="EMD-23938"/>
<dbReference type="EMDB" id="EMD-26067"/>
<dbReference type="EMDB" id="EMD-29757"/>
<dbReference type="EMDB" id="EMD-29758"/>
<dbReference type="EMDB" id="EMD-29759"/>
<dbReference type="EMDB" id="EMD-29760"/>
<dbReference type="EMDB" id="EMD-29771"/>
<dbReference type="EMDB" id="EMD-32799"/>
<dbReference type="EMDB" id="EMD-32800"/>
<dbReference type="EMDB" id="EMD-32801"/>
<dbReference type="EMDB" id="EMD-32802"/>
<dbReference type="EMDB" id="EMD-32803"/>
<dbReference type="EMDB" id="EMD-32804"/>
<dbReference type="EMDB" id="EMD-32806"/>
<dbReference type="EMDB" id="EMD-32807"/>
<dbReference type="EMDB" id="EMD-33329"/>
<dbReference type="EMDB" id="EMD-33330"/>
<dbReference type="EMDB" id="EMD-35413"/>
<dbReference type="EMDB" id="EMD-35414"/>
<dbReference type="EMDB" id="EMD-36178"/>
<dbReference type="EMDB" id="EMD-36179"/>
<dbReference type="EMDB" id="EMD-36180"/>
<dbReference type="EMDB" id="EMD-36181"/>
<dbReference type="EMDB" id="EMD-36838"/>
<dbReference type="EMDB" id="EMD-3770"/>
<dbReference type="EMDB" id="EMD-38548"/>
<dbReference type="EMDB" id="EMD-38549"/>
<dbReference type="EMDB" id="EMD-38629"/>
<dbReference type="EMDB" id="EMD-38630"/>
<dbReference type="EMDB" id="EMD-38631"/>
<dbReference type="EMDB" id="EMD-38752"/>
<dbReference type="EMDB" id="EMD-38753"/>
<dbReference type="EMDB" id="EMD-38754"/>
<dbReference type="EMDB" id="EMD-3883"/>
<dbReference type="EMDB" id="EMD-39455"/>
<dbReference type="EMDB" id="EMD-39456"/>
<dbReference type="EMDB" id="EMD-39956"/>
<dbReference type="EMDB" id="EMD-39957"/>
<dbReference type="EMDB" id="EMD-39958"/>
<dbReference type="EMDB" id="EMD-40205"/>
<dbReference type="EMDB" id="EMD-4070"/>
<dbReference type="EMDB" id="EMD-41039"/>
<dbReference type="EMDB" id="EMD-42351"/>
<dbReference type="EMDB" id="EMD-4242"/>
<dbReference type="EMDB" id="EMD-4337"/>
<dbReference type="EMDB" id="EMD-4348"/>
<dbReference type="EMDB" id="EMD-4349"/>
<dbReference type="EMDB" id="EMD-4350"/>
<dbReference type="EMDB" id="EMD-4351"/>
<dbReference type="EMDB" id="EMD-4352"/>
<dbReference type="EMDB" id="EMD-4353"/>
<dbReference type="EMDB" id="EMD-44641"/>
<dbReference type="EMDB" id="EMD-44671"/>
<dbReference type="EMDB" id="EMD-45170"/>
<dbReference type="EMDB" id="EMD-51132"/>
<dbReference type="EMDB" id="EMD-51134"/>
<dbReference type="EMDB" id="EMD-9701"/>
<dbReference type="EMDB" id="EMD-9702"/>
<dbReference type="EMDB" id="EMD-9703"/>
<dbReference type="SMR" id="P42677"/>
<dbReference type="BioGRID" id="112146">
    <property type="interactions" value="379"/>
</dbReference>
<dbReference type="ComplexPortal" id="CPX-5223">
    <property type="entry name" value="40S cytosolic small ribosomal subunit"/>
</dbReference>
<dbReference type="CORUM" id="P42677"/>
<dbReference type="DIP" id="DIP-44182N"/>
<dbReference type="FunCoup" id="P42677">
    <property type="interactions" value="2088"/>
</dbReference>
<dbReference type="IntAct" id="P42677">
    <property type="interactions" value="137"/>
</dbReference>
<dbReference type="MINT" id="P42677"/>
<dbReference type="STRING" id="9606.ENSP00000499044"/>
<dbReference type="BindingDB" id="P42677"/>
<dbReference type="ChEMBL" id="CHEMBL1932893"/>
<dbReference type="GlyGen" id="P42677">
    <property type="glycosylation" value="1 site, 1 O-linked glycan (1 site)"/>
</dbReference>
<dbReference type="iPTMnet" id="P42677"/>
<dbReference type="MetOSite" id="P42677"/>
<dbReference type="PhosphoSitePlus" id="P42677"/>
<dbReference type="SwissPalm" id="P42677"/>
<dbReference type="BioMuta" id="RPS27"/>
<dbReference type="DMDM" id="1171014"/>
<dbReference type="jPOST" id="P42677"/>
<dbReference type="MassIVE" id="P42677"/>
<dbReference type="PaxDb" id="9606-ENSP00000357555"/>
<dbReference type="PeptideAtlas" id="P42677"/>
<dbReference type="ProteomicsDB" id="55523"/>
<dbReference type="Pumba" id="P42677"/>
<dbReference type="TopDownProteomics" id="P42677"/>
<dbReference type="Antibodypedia" id="20391">
    <property type="antibodies" value="262 antibodies from 32 providers"/>
</dbReference>
<dbReference type="DNASU" id="6232"/>
<dbReference type="Ensembl" id="ENST00000651669.1">
    <property type="protein sequence ID" value="ENSP00000499044.1"/>
    <property type="gene ID" value="ENSG00000177954.14"/>
</dbReference>
<dbReference type="GeneID" id="6232"/>
<dbReference type="KEGG" id="hsa:6232"/>
<dbReference type="MANE-Select" id="ENST00000651669.1">
    <property type="protein sequence ID" value="ENSP00000499044.1"/>
    <property type="RefSeq nucleotide sequence ID" value="NM_001030.6"/>
    <property type="RefSeq protein sequence ID" value="NP_001021.1"/>
</dbReference>
<dbReference type="UCSC" id="uc001fdv.4">
    <property type="organism name" value="human"/>
</dbReference>
<dbReference type="AGR" id="HGNC:10416"/>
<dbReference type="CTD" id="6232"/>
<dbReference type="DisGeNET" id="6232"/>
<dbReference type="GeneCards" id="RPS27"/>
<dbReference type="GeneReviews" id="RPS27"/>
<dbReference type="HGNC" id="HGNC:10416">
    <property type="gene designation" value="RPS27"/>
</dbReference>
<dbReference type="HPA" id="ENSG00000177954">
    <property type="expression patterns" value="Low tissue specificity"/>
</dbReference>
<dbReference type="MalaCards" id="RPS27"/>
<dbReference type="MIM" id="603702">
    <property type="type" value="gene"/>
</dbReference>
<dbReference type="MIM" id="617409">
    <property type="type" value="phenotype"/>
</dbReference>
<dbReference type="neXtProt" id="NX_P42677"/>
<dbReference type="OpenTargets" id="ENSG00000177954"/>
<dbReference type="Orphanet" id="124">
    <property type="disease" value="Diamond-Blackfan anemia"/>
</dbReference>
<dbReference type="PharmGKB" id="PA34820"/>
<dbReference type="VEuPathDB" id="HostDB:ENSG00000177954"/>
<dbReference type="eggNOG" id="KOG1779">
    <property type="taxonomic scope" value="Eukaryota"/>
</dbReference>
<dbReference type="GeneTree" id="ENSGT00950000182891"/>
<dbReference type="HOGENOM" id="CLU_130128_3_0_1"/>
<dbReference type="InParanoid" id="P42677"/>
<dbReference type="OMA" id="CASILCQ"/>
<dbReference type="OrthoDB" id="9523474at2759"/>
<dbReference type="PAN-GO" id="P42677">
    <property type="GO annotations" value="4 GO annotations based on evolutionary models"/>
</dbReference>
<dbReference type="PhylomeDB" id="P42677"/>
<dbReference type="TreeFam" id="TF300265"/>
<dbReference type="PathwayCommons" id="P42677"/>
<dbReference type="Reactome" id="R-HSA-141444">
    <property type="pathway name" value="Amplification of signal from unattached kinetochores via a MAD2 inhibitory signal"/>
</dbReference>
<dbReference type="Reactome" id="R-HSA-156827">
    <property type="pathway name" value="L13a-mediated translational silencing of Ceruloplasmin expression"/>
</dbReference>
<dbReference type="Reactome" id="R-HSA-156902">
    <property type="pathway name" value="Peptide chain elongation"/>
</dbReference>
<dbReference type="Reactome" id="R-HSA-1799339">
    <property type="pathway name" value="SRP-dependent cotranslational protein targeting to membrane"/>
</dbReference>
<dbReference type="Reactome" id="R-HSA-192823">
    <property type="pathway name" value="Viral mRNA Translation"/>
</dbReference>
<dbReference type="Reactome" id="R-HSA-2408557">
    <property type="pathway name" value="Selenocysteine synthesis"/>
</dbReference>
<dbReference type="Reactome" id="R-HSA-2467813">
    <property type="pathway name" value="Separation of Sister Chromatids"/>
</dbReference>
<dbReference type="Reactome" id="R-HSA-2500257">
    <property type="pathway name" value="Resolution of Sister Chromatid Cohesion"/>
</dbReference>
<dbReference type="Reactome" id="R-HSA-5663220">
    <property type="pathway name" value="RHO GTPases Activate Formins"/>
</dbReference>
<dbReference type="Reactome" id="R-HSA-6791226">
    <property type="pathway name" value="Major pathway of rRNA processing in the nucleolus and cytosol"/>
</dbReference>
<dbReference type="Reactome" id="R-HSA-68877">
    <property type="pathway name" value="Mitotic Prometaphase"/>
</dbReference>
<dbReference type="Reactome" id="R-HSA-72649">
    <property type="pathway name" value="Translation initiation complex formation"/>
</dbReference>
<dbReference type="Reactome" id="R-HSA-72689">
    <property type="pathway name" value="Formation of a pool of free 40S subunits"/>
</dbReference>
<dbReference type="Reactome" id="R-HSA-72695">
    <property type="pathway name" value="Formation of the ternary complex, and subsequently, the 43S complex"/>
</dbReference>
<dbReference type="Reactome" id="R-HSA-72702">
    <property type="pathway name" value="Ribosomal scanning and start codon recognition"/>
</dbReference>
<dbReference type="Reactome" id="R-HSA-72706">
    <property type="pathway name" value="GTP hydrolysis and joining of the 60S ribosomal subunit"/>
</dbReference>
<dbReference type="Reactome" id="R-HSA-72764">
    <property type="pathway name" value="Eukaryotic Translation Termination"/>
</dbReference>
<dbReference type="Reactome" id="R-HSA-9010553">
    <property type="pathway name" value="Regulation of expression of SLITs and ROBOs"/>
</dbReference>
<dbReference type="Reactome" id="R-HSA-9633012">
    <property type="pathway name" value="Response of EIF2AK4 (GCN2) to amino acid deficiency"/>
</dbReference>
<dbReference type="Reactome" id="R-HSA-9648025">
    <property type="pathway name" value="EML4 and NUDC in mitotic spindle formation"/>
</dbReference>
<dbReference type="Reactome" id="R-HSA-9735869">
    <property type="pathway name" value="SARS-CoV-1 modulates host translation machinery"/>
</dbReference>
<dbReference type="Reactome" id="R-HSA-9754678">
    <property type="pathway name" value="SARS-CoV-2 modulates host translation machinery"/>
</dbReference>
<dbReference type="Reactome" id="R-HSA-975956">
    <property type="pathway name" value="Nonsense Mediated Decay (NMD) independent of the Exon Junction Complex (EJC)"/>
</dbReference>
<dbReference type="Reactome" id="R-HSA-975957">
    <property type="pathway name" value="Nonsense Mediated Decay (NMD) enhanced by the Exon Junction Complex (EJC)"/>
</dbReference>
<dbReference type="SignaLink" id="P42677"/>
<dbReference type="SIGNOR" id="P42677"/>
<dbReference type="BioGRID-ORCS" id="6232">
    <property type="hits" value="448 hits in 705 CRISPR screens"/>
</dbReference>
<dbReference type="CD-CODE" id="91857CE7">
    <property type="entry name" value="Nucleolus"/>
</dbReference>
<dbReference type="CD-CODE" id="FB4E32DD">
    <property type="entry name" value="Presynaptic clusters and postsynaptic densities"/>
</dbReference>
<dbReference type="ChiTaRS" id="RPS27">
    <property type="organism name" value="human"/>
</dbReference>
<dbReference type="EvolutionaryTrace" id="P42677"/>
<dbReference type="GeneWiki" id="RPS27"/>
<dbReference type="GenomeRNAi" id="6232"/>
<dbReference type="Pharos" id="P42677">
    <property type="development level" value="Tchem"/>
</dbReference>
<dbReference type="PRO" id="PR:P42677"/>
<dbReference type="Proteomes" id="UP000005640">
    <property type="component" value="Chromosome 1"/>
</dbReference>
<dbReference type="RNAct" id="P42677">
    <property type="molecule type" value="protein"/>
</dbReference>
<dbReference type="Bgee" id="ENSG00000177954">
    <property type="expression patterns" value="Expressed in ganglionic eminence and 96 other cell types or tissues"/>
</dbReference>
<dbReference type="ExpressionAtlas" id="P42677">
    <property type="expression patterns" value="baseline and differential"/>
</dbReference>
<dbReference type="GO" id="GO:0005829">
    <property type="term" value="C:cytosol"/>
    <property type="evidence" value="ECO:0000304"/>
    <property type="project" value="Reactome"/>
</dbReference>
<dbReference type="GO" id="GO:0022626">
    <property type="term" value="C:cytosolic ribosome"/>
    <property type="evidence" value="ECO:0000314"/>
    <property type="project" value="FlyBase"/>
</dbReference>
<dbReference type="GO" id="GO:0022627">
    <property type="term" value="C:cytosolic small ribosomal subunit"/>
    <property type="evidence" value="ECO:0000314"/>
    <property type="project" value="UniProtKB"/>
</dbReference>
<dbReference type="GO" id="GO:0098982">
    <property type="term" value="C:GABA-ergic synapse"/>
    <property type="evidence" value="ECO:0007669"/>
    <property type="project" value="Ensembl"/>
</dbReference>
<dbReference type="GO" id="GO:0098978">
    <property type="term" value="C:glutamatergic synapse"/>
    <property type="evidence" value="ECO:0007669"/>
    <property type="project" value="Ensembl"/>
</dbReference>
<dbReference type="GO" id="GO:0005730">
    <property type="term" value="C:nucleolus"/>
    <property type="evidence" value="ECO:0007669"/>
    <property type="project" value="UniProtKB-SubCell"/>
</dbReference>
<dbReference type="GO" id="GO:0005654">
    <property type="term" value="C:nucleoplasm"/>
    <property type="evidence" value="ECO:0000304"/>
    <property type="project" value="Reactome"/>
</dbReference>
<dbReference type="GO" id="GO:0005634">
    <property type="term" value="C:nucleus"/>
    <property type="evidence" value="ECO:0000314"/>
    <property type="project" value="UniProtKB"/>
</dbReference>
<dbReference type="GO" id="GO:0014069">
    <property type="term" value="C:postsynaptic density"/>
    <property type="evidence" value="ECO:0000314"/>
    <property type="project" value="SynGO"/>
</dbReference>
<dbReference type="GO" id="GO:0098793">
    <property type="term" value="C:presynapse"/>
    <property type="evidence" value="ECO:0007669"/>
    <property type="project" value="Ensembl"/>
</dbReference>
<dbReference type="GO" id="GO:0005840">
    <property type="term" value="C:ribosome"/>
    <property type="evidence" value="ECO:0000303"/>
    <property type="project" value="UniProtKB"/>
</dbReference>
<dbReference type="GO" id="GO:0032040">
    <property type="term" value="C:small-subunit processome"/>
    <property type="evidence" value="ECO:0000314"/>
    <property type="project" value="UniProtKB"/>
</dbReference>
<dbReference type="GO" id="GO:0003677">
    <property type="term" value="F:DNA binding"/>
    <property type="evidence" value="ECO:0000303"/>
    <property type="project" value="UniProtKB"/>
</dbReference>
<dbReference type="GO" id="GO:0003723">
    <property type="term" value="F:RNA binding"/>
    <property type="evidence" value="ECO:0007005"/>
    <property type="project" value="UniProtKB"/>
</dbReference>
<dbReference type="GO" id="GO:0003735">
    <property type="term" value="F:structural constituent of ribosome"/>
    <property type="evidence" value="ECO:0000314"/>
    <property type="project" value="FlyBase"/>
</dbReference>
<dbReference type="GO" id="GO:0008270">
    <property type="term" value="F:zinc ion binding"/>
    <property type="evidence" value="ECO:0000303"/>
    <property type="project" value="UniProtKB"/>
</dbReference>
<dbReference type="GO" id="GO:0002181">
    <property type="term" value="P:cytoplasmic translation"/>
    <property type="evidence" value="ECO:0000305"/>
    <property type="project" value="FlyBase"/>
</dbReference>
<dbReference type="GO" id="GO:0000028">
    <property type="term" value="P:ribosomal small subunit assembly"/>
    <property type="evidence" value="ECO:0000318"/>
    <property type="project" value="GO_Central"/>
</dbReference>
<dbReference type="GO" id="GO:0042274">
    <property type="term" value="P:ribosomal small subunit biogenesis"/>
    <property type="evidence" value="ECO:0000314"/>
    <property type="project" value="UniProtKB"/>
</dbReference>
<dbReference type="GO" id="GO:0006364">
    <property type="term" value="P:rRNA processing"/>
    <property type="evidence" value="ECO:0000315"/>
    <property type="project" value="UniProtKB"/>
</dbReference>
<dbReference type="GO" id="GO:0006412">
    <property type="term" value="P:translation"/>
    <property type="evidence" value="ECO:0000303"/>
    <property type="project" value="UniProtKB"/>
</dbReference>
<dbReference type="FunFam" id="2.20.25.100:FF:000001">
    <property type="entry name" value="40S ribosomal protein S27"/>
    <property type="match status" value="1"/>
</dbReference>
<dbReference type="Gene3D" id="2.20.25.100">
    <property type="entry name" value="Zn-binding ribosomal proteins"/>
    <property type="match status" value="1"/>
</dbReference>
<dbReference type="HAMAP" id="MF_00371">
    <property type="entry name" value="Ribosomal_eS27"/>
    <property type="match status" value="1"/>
</dbReference>
<dbReference type="InterPro" id="IPR000592">
    <property type="entry name" value="Ribosomal_eS27"/>
</dbReference>
<dbReference type="InterPro" id="IPR023407">
    <property type="entry name" value="Ribosomal_eS27_Zn-bd_dom_sf"/>
</dbReference>
<dbReference type="InterPro" id="IPR011332">
    <property type="entry name" value="Ribosomal_zn-bd"/>
</dbReference>
<dbReference type="PANTHER" id="PTHR11594">
    <property type="entry name" value="40S RIBOSOMAL PROTEIN S27"/>
    <property type="match status" value="1"/>
</dbReference>
<dbReference type="Pfam" id="PF01667">
    <property type="entry name" value="Ribosomal_S27e"/>
    <property type="match status" value="1"/>
</dbReference>
<dbReference type="SUPFAM" id="SSF57829">
    <property type="entry name" value="Zn-binding ribosomal proteins"/>
    <property type="match status" value="1"/>
</dbReference>
<dbReference type="PROSITE" id="PS01168">
    <property type="entry name" value="RIBOSOMAL_S27E"/>
    <property type="match status" value="1"/>
</dbReference>
<proteinExistence type="evidence at protein level"/>
<gene>
    <name evidence="12" type="primary">RPS27</name>
    <name type="synonym">MPS1</name>
</gene>
<name>RS27_HUMAN</name>
<accession>P42677</accession>
<accession>Q5T4L6</accession>
<protein>
    <recommendedName>
        <fullName evidence="8">Small ribosomal subunit protein eS27</fullName>
    </recommendedName>
    <alternativeName>
        <fullName>40S ribosomal protein S27</fullName>
    </alternativeName>
    <alternativeName>
        <fullName>Metallopan-stimulin 1</fullName>
        <shortName>MPS-1</shortName>
    </alternativeName>
</protein>
<evidence type="ECO:0000255" key="1"/>
<evidence type="ECO:0000256" key="2">
    <source>
        <dbReference type="SAM" id="MobiDB-lite"/>
    </source>
</evidence>
<evidence type="ECO:0000269" key="3">
    <source>
    </source>
</evidence>
<evidence type="ECO:0000269" key="4">
    <source>
    </source>
</evidence>
<evidence type="ECO:0000269" key="5">
    <source>
    </source>
</evidence>
<evidence type="ECO:0000269" key="6">
    <source>
    </source>
</evidence>
<evidence type="ECO:0000269" key="7">
    <source>
    </source>
</evidence>
<evidence type="ECO:0000303" key="8">
    <source>
    </source>
</evidence>
<evidence type="ECO:0000305" key="9"/>
<evidence type="ECO:0000305" key="10">
    <source>
    </source>
</evidence>
<evidence type="ECO:0000305" key="11">
    <source>
    </source>
</evidence>
<evidence type="ECO:0000312" key="12">
    <source>
        <dbReference type="HGNC" id="HGNC:10416"/>
    </source>
</evidence>
<evidence type="ECO:0007744" key="13">
    <source>
        <dbReference type="PDB" id="7MQ8"/>
    </source>
</evidence>
<evidence type="ECO:0007744" key="14">
    <source>
        <dbReference type="PDB" id="7MQ9"/>
    </source>
</evidence>
<evidence type="ECO:0007744" key="15">
    <source>
        <dbReference type="PDB" id="7MQA"/>
    </source>
</evidence>
<evidence type="ECO:0007744" key="16">
    <source>
    </source>
</evidence>
<evidence type="ECO:0007744" key="17">
    <source>
    </source>
</evidence>
<evidence type="ECO:0007744" key="18">
    <source>
    </source>
</evidence>
<evidence type="ECO:0007829" key="19">
    <source>
        <dbReference type="PDB" id="6ZLW"/>
    </source>
</evidence>
<evidence type="ECO:0007829" key="20">
    <source>
        <dbReference type="PDB" id="6ZMT"/>
    </source>
</evidence>
<evidence type="ECO:0007829" key="21">
    <source>
        <dbReference type="PDB" id="6ZXG"/>
    </source>
</evidence>
<evidence type="ECO:0007829" key="22">
    <source>
        <dbReference type="PDB" id="7R4X"/>
    </source>
</evidence>
<feature type="initiator methionine" description="Removed" evidence="7">
    <location>
        <position position="1"/>
    </location>
</feature>
<feature type="chain" id="PRO_0000149051" description="Small ribosomal subunit protein eS27">
    <location>
        <begin position="2"/>
        <end position="84"/>
    </location>
</feature>
<feature type="zinc finger region" description="C4-type" evidence="1">
    <location>
        <begin position="37"/>
        <end position="59"/>
    </location>
</feature>
<feature type="region of interest" description="Disordered" evidence="2">
    <location>
        <begin position="1"/>
        <end position="23"/>
    </location>
</feature>
<feature type="compositionally biased region" description="Basic and acidic residues" evidence="2">
    <location>
        <begin position="1"/>
        <end position="16"/>
    </location>
</feature>
<feature type="binding site" evidence="5 13">
    <location>
        <position position="37"/>
    </location>
    <ligand>
        <name>Zn(2+)</name>
        <dbReference type="ChEBI" id="CHEBI:29105"/>
    </ligand>
</feature>
<feature type="binding site" evidence="5 13">
    <location>
        <position position="40"/>
    </location>
    <ligand>
        <name>Zn(2+)</name>
        <dbReference type="ChEBI" id="CHEBI:29105"/>
    </ligand>
</feature>
<feature type="binding site" evidence="5 13">
    <location>
        <position position="56"/>
    </location>
    <ligand>
        <name>Zn(2+)</name>
        <dbReference type="ChEBI" id="CHEBI:29105"/>
    </ligand>
</feature>
<feature type="binding site" evidence="5 13">
    <location>
        <position position="59"/>
    </location>
    <ligand>
        <name>Zn(2+)</name>
        <dbReference type="ChEBI" id="CHEBI:29105"/>
    </ligand>
</feature>
<feature type="modified residue" description="Phosphoserine" evidence="16 17 18">
    <location>
        <position position="11"/>
    </location>
</feature>
<feature type="sequence conflict" description="In Ref. 8; AA sequence." evidence="9" ref="8">
    <original>K</original>
    <variation>R</variation>
    <location>
        <position position="5"/>
    </location>
</feature>
<feature type="strand" evidence="19">
    <location>
        <begin position="7"/>
        <end position="9"/>
    </location>
</feature>
<feature type="helix" evidence="22">
    <location>
        <begin position="12"/>
        <end position="17"/>
    </location>
</feature>
<feature type="helix" evidence="22">
    <location>
        <begin position="20"/>
        <end position="22"/>
    </location>
</feature>
<feature type="strand" evidence="22">
    <location>
        <begin position="23"/>
        <end position="25"/>
    </location>
</feature>
<feature type="strand" evidence="22">
    <location>
        <begin position="32"/>
        <end position="36"/>
    </location>
</feature>
<feature type="strand" evidence="21">
    <location>
        <begin position="38"/>
        <end position="41"/>
    </location>
</feature>
<feature type="strand" evidence="22">
    <location>
        <begin position="43"/>
        <end position="47"/>
    </location>
</feature>
<feature type="strand" evidence="20">
    <location>
        <begin position="54"/>
        <end position="56"/>
    </location>
</feature>
<feature type="strand" evidence="22">
    <location>
        <begin position="57"/>
        <end position="60"/>
    </location>
</feature>
<feature type="strand" evidence="22">
    <location>
        <begin position="62"/>
        <end position="65"/>
    </location>
</feature>
<feature type="strand" evidence="22">
    <location>
        <begin position="68"/>
        <end position="70"/>
    </location>
</feature>
<feature type="strand" evidence="22">
    <location>
        <begin position="78"/>
        <end position="81"/>
    </location>
</feature>
<comment type="function">
    <text evidence="3 4 5 7">Component of the small ribosomal subunit (PubMed:23636399, PubMed:8706699). The ribosome is a large ribonucleoprotein complex responsible for the synthesis of proteins in the cell (PubMed:23636399). Required for proper rRNA processing and maturation of 18S rRNAs (PubMed:25424902). Part of the small subunit (SSU) processome, first precursor of the small eukaryotic ribosomal subunit. During the assembly of the SSU processome in the nucleolus, many ribosome biogenesis factors, an RNA chaperone and ribosomal proteins associate with the nascent pre-rRNA and work in concert to generate RNA folding, modifications, rearrangements and cleavage as well as targeted degradation of pre-ribosomal RNA by the RNA exosome (PubMed:34516797).</text>
</comment>
<comment type="cofactor">
    <cofactor evidence="9">
        <name>Zn(2+)</name>
        <dbReference type="ChEBI" id="CHEBI:29105"/>
    </cofactor>
    <text evidence="9">Binds 1 zinc ion per subunit.</text>
</comment>
<comment type="subunit">
    <text evidence="3 5 11">Component of the small ribosomal subunit (Probable) (PubMed:23636399). Part of the small subunit (SSU) processome, composed of more than 70 proteins and the RNA chaperone small nucleolar RNA (snoRNA) U3 (PubMed:34516797).</text>
</comment>
<comment type="interaction">
    <interactant intactId="EBI-356336">
        <id>P42677</id>
    </interactant>
    <interactant intactId="EBI-621372">
        <id>P54132</id>
        <label>BLM</label>
    </interactant>
    <organismsDiffer>false</organismsDiffer>
    <experiments>4</experiments>
</comment>
<comment type="interaction">
    <interactant intactId="EBI-356336">
        <id>P42677</id>
    </interactant>
    <interactant intactId="EBI-5323863">
        <id>Q5S007</id>
        <label>LRRK2</label>
    </interactant>
    <organismsDiffer>false</organismsDiffer>
    <experiments>4</experiments>
</comment>
<comment type="interaction">
    <interactant intactId="EBI-356336">
        <id>P42677</id>
    </interactant>
    <interactant intactId="EBI-389668">
        <id>Q00987</id>
        <label>MDM2</label>
    </interactant>
    <organismsDiffer>false</organismsDiffer>
    <experiments>5</experiments>
</comment>
<comment type="interaction">
    <interactant intactId="EBI-356336">
        <id>P42677</id>
    </interactant>
    <interactant intactId="EBI-355546">
        <id>P61289</id>
        <label>PSME3</label>
    </interactant>
    <organismsDiffer>false</organismsDiffer>
    <experiments>3</experiments>
</comment>
<comment type="subcellular location">
    <subcellularLocation>
        <location evidence="3">Cytoplasm</location>
    </subcellularLocation>
    <subcellularLocation>
        <location evidence="5">Nucleus</location>
        <location evidence="5">Nucleolus</location>
    </subcellularLocation>
</comment>
<comment type="tissue specificity">
    <text evidence="6">Expressed in a wide variety of actively proliferating cells and tumor tissues.</text>
</comment>
<comment type="disease" evidence="4">
    <disease id="DI-04959">
        <name>Diamond-Blackfan anemia 17</name>
        <acronym>DBA17</acronym>
        <description>A form of Diamond-Blackfan anemia, a congenital non-regenerative hypoplastic anemia that usually presents early in infancy. Diamond-Blackfan anemia is characterized by a moderate to severe macrocytic anemia, erythroblastopenia, and an increased risk of malignancy. 30 to 40% of Diamond-Blackfan anemia patients present with short stature and congenital anomalies, the most frequent being craniofacial (Pierre-Robin syndrome and cleft palate), thumb and urogenital anomalies.</description>
        <dbReference type="MIM" id="617409"/>
    </disease>
    <text>The disease is caused by variants affecting the gene represented in this entry.</text>
</comment>
<comment type="similarity">
    <text evidence="9">Belongs to the eukaryotic ribosomal protein eS27 family.</text>
</comment>
<comment type="caution">
    <text evidence="10">Was originally (PubMed:8407955) thought to be a protein that could have played a role as a potentially important mediator of cellular proliferative responses to various growth factors and other environmental signals. Capable of specific binding to a cAMP response element in DNA.</text>
</comment>
<comment type="online information" name="Atlas of Genetics and Cytogenetics in Oncology and Haematology">
    <link uri="https://atlasgeneticsoncology.org/gene/45550/RPS27"/>
</comment>
<reference key="1">
    <citation type="journal article" date="1993" name="J. Biol. Chem.">
        <title>A growth factor-inducible gene encodes a novel nuclear protein with zinc finger structure.</title>
        <authorList>
            <person name="Fernandez-Pol J.A."/>
            <person name="Klos D.J."/>
            <person name="Hamilton P.D."/>
        </authorList>
    </citation>
    <scope>NUCLEOTIDE SEQUENCE [MRNA]</scope>
    <scope>TISSUE SPECIFICITY</scope>
    <source>
        <tissue>Mammary carcinoma</tissue>
    </source>
</reference>
<reference key="2">
    <citation type="journal article" date="1996" name="Biochem. Mol. Biol. Int.">
        <title>Primary structures and sequence analysis of human ribosomal proteins L39 and S27.</title>
        <authorList>
            <person name="Tsui S.K.W."/>
            <person name="Lee S.M.Y."/>
            <person name="Fung K.P."/>
            <person name="Waye M.M.Y."/>
            <person name="Lee C.Y."/>
        </authorList>
    </citation>
    <scope>NUCLEOTIDE SEQUENCE [MRNA]</scope>
    <source>
        <tissue>Heart</tissue>
    </source>
</reference>
<reference key="3">
    <citation type="journal article" date="2002" name="Genome Res.">
        <title>The human ribosomal protein genes: sequencing and comparative analysis of 73 genes.</title>
        <authorList>
            <person name="Yoshihama M."/>
            <person name="Uechi T."/>
            <person name="Asakawa S."/>
            <person name="Kawasaki K."/>
            <person name="Kato S."/>
            <person name="Higa S."/>
            <person name="Maeda N."/>
            <person name="Minoshima S."/>
            <person name="Tanaka T."/>
            <person name="Shimizu N."/>
            <person name="Kenmochi N."/>
        </authorList>
    </citation>
    <scope>NUCLEOTIDE SEQUENCE [GENOMIC DNA]</scope>
</reference>
<reference key="4">
    <citation type="journal article" date="2004" name="Nat. Genet.">
        <title>Complete sequencing and characterization of 21,243 full-length human cDNAs.</title>
        <authorList>
            <person name="Ota T."/>
            <person name="Suzuki Y."/>
            <person name="Nishikawa T."/>
            <person name="Otsuki T."/>
            <person name="Sugiyama T."/>
            <person name="Irie R."/>
            <person name="Wakamatsu A."/>
            <person name="Hayashi K."/>
            <person name="Sato H."/>
            <person name="Nagai K."/>
            <person name="Kimura K."/>
            <person name="Makita H."/>
            <person name="Sekine M."/>
            <person name="Obayashi M."/>
            <person name="Nishi T."/>
            <person name="Shibahara T."/>
            <person name="Tanaka T."/>
            <person name="Ishii S."/>
            <person name="Yamamoto J."/>
            <person name="Saito K."/>
            <person name="Kawai Y."/>
            <person name="Isono Y."/>
            <person name="Nakamura Y."/>
            <person name="Nagahari K."/>
            <person name="Murakami K."/>
            <person name="Yasuda T."/>
            <person name="Iwayanagi T."/>
            <person name="Wagatsuma M."/>
            <person name="Shiratori A."/>
            <person name="Sudo H."/>
            <person name="Hosoiri T."/>
            <person name="Kaku Y."/>
            <person name="Kodaira H."/>
            <person name="Kondo H."/>
            <person name="Sugawara M."/>
            <person name="Takahashi M."/>
            <person name="Kanda K."/>
            <person name="Yokoi T."/>
            <person name="Furuya T."/>
            <person name="Kikkawa E."/>
            <person name="Omura Y."/>
            <person name="Abe K."/>
            <person name="Kamihara K."/>
            <person name="Katsuta N."/>
            <person name="Sato K."/>
            <person name="Tanikawa M."/>
            <person name="Yamazaki M."/>
            <person name="Ninomiya K."/>
            <person name="Ishibashi T."/>
            <person name="Yamashita H."/>
            <person name="Murakawa K."/>
            <person name="Fujimori K."/>
            <person name="Tanai H."/>
            <person name="Kimata M."/>
            <person name="Watanabe M."/>
            <person name="Hiraoka S."/>
            <person name="Chiba Y."/>
            <person name="Ishida S."/>
            <person name="Ono Y."/>
            <person name="Takiguchi S."/>
            <person name="Watanabe S."/>
            <person name="Yosida M."/>
            <person name="Hotuta T."/>
            <person name="Kusano J."/>
            <person name="Kanehori K."/>
            <person name="Takahashi-Fujii A."/>
            <person name="Hara H."/>
            <person name="Tanase T.-O."/>
            <person name="Nomura Y."/>
            <person name="Togiya S."/>
            <person name="Komai F."/>
            <person name="Hara R."/>
            <person name="Takeuchi K."/>
            <person name="Arita M."/>
            <person name="Imose N."/>
            <person name="Musashino K."/>
            <person name="Yuuki H."/>
            <person name="Oshima A."/>
            <person name="Sasaki N."/>
            <person name="Aotsuka S."/>
            <person name="Yoshikawa Y."/>
            <person name="Matsunawa H."/>
            <person name="Ichihara T."/>
            <person name="Shiohata N."/>
            <person name="Sano S."/>
            <person name="Moriya S."/>
            <person name="Momiyama H."/>
            <person name="Satoh N."/>
            <person name="Takami S."/>
            <person name="Terashima Y."/>
            <person name="Suzuki O."/>
            <person name="Nakagawa S."/>
            <person name="Senoh A."/>
            <person name="Mizoguchi H."/>
            <person name="Goto Y."/>
            <person name="Shimizu F."/>
            <person name="Wakebe H."/>
            <person name="Hishigaki H."/>
            <person name="Watanabe T."/>
            <person name="Sugiyama A."/>
            <person name="Takemoto M."/>
            <person name="Kawakami B."/>
            <person name="Yamazaki M."/>
            <person name="Watanabe K."/>
            <person name="Kumagai A."/>
            <person name="Itakura S."/>
            <person name="Fukuzumi Y."/>
            <person name="Fujimori Y."/>
            <person name="Komiyama M."/>
            <person name="Tashiro H."/>
            <person name="Tanigami A."/>
            <person name="Fujiwara T."/>
            <person name="Ono T."/>
            <person name="Yamada K."/>
            <person name="Fujii Y."/>
            <person name="Ozaki K."/>
            <person name="Hirao M."/>
            <person name="Ohmori Y."/>
            <person name="Kawabata A."/>
            <person name="Hikiji T."/>
            <person name="Kobatake N."/>
            <person name="Inagaki H."/>
            <person name="Ikema Y."/>
            <person name="Okamoto S."/>
            <person name="Okitani R."/>
            <person name="Kawakami T."/>
            <person name="Noguchi S."/>
            <person name="Itoh T."/>
            <person name="Shigeta K."/>
            <person name="Senba T."/>
            <person name="Matsumura K."/>
            <person name="Nakajima Y."/>
            <person name="Mizuno T."/>
            <person name="Morinaga M."/>
            <person name="Sasaki M."/>
            <person name="Togashi T."/>
            <person name="Oyama M."/>
            <person name="Hata H."/>
            <person name="Watanabe M."/>
            <person name="Komatsu T."/>
            <person name="Mizushima-Sugano J."/>
            <person name="Satoh T."/>
            <person name="Shirai Y."/>
            <person name="Takahashi Y."/>
            <person name="Nakagawa K."/>
            <person name="Okumura K."/>
            <person name="Nagase T."/>
            <person name="Nomura N."/>
            <person name="Kikuchi H."/>
            <person name="Masuho Y."/>
            <person name="Yamashita R."/>
            <person name="Nakai K."/>
            <person name="Yada T."/>
            <person name="Nakamura Y."/>
            <person name="Ohara O."/>
            <person name="Isogai T."/>
            <person name="Sugano S."/>
        </authorList>
    </citation>
    <scope>NUCLEOTIDE SEQUENCE [LARGE SCALE MRNA]</scope>
    <source>
        <tissue>Tongue</tissue>
    </source>
</reference>
<reference key="5">
    <citation type="journal article" date="2006" name="Nature">
        <title>The DNA sequence and biological annotation of human chromosome 1.</title>
        <authorList>
            <person name="Gregory S.G."/>
            <person name="Barlow K.F."/>
            <person name="McLay K.E."/>
            <person name="Kaul R."/>
            <person name="Swarbreck D."/>
            <person name="Dunham A."/>
            <person name="Scott C.E."/>
            <person name="Howe K.L."/>
            <person name="Woodfine K."/>
            <person name="Spencer C.C.A."/>
            <person name="Jones M.C."/>
            <person name="Gillson C."/>
            <person name="Searle S."/>
            <person name="Zhou Y."/>
            <person name="Kokocinski F."/>
            <person name="McDonald L."/>
            <person name="Evans R."/>
            <person name="Phillips K."/>
            <person name="Atkinson A."/>
            <person name="Cooper R."/>
            <person name="Jones C."/>
            <person name="Hall R.E."/>
            <person name="Andrews T.D."/>
            <person name="Lloyd C."/>
            <person name="Ainscough R."/>
            <person name="Almeida J.P."/>
            <person name="Ambrose K.D."/>
            <person name="Anderson F."/>
            <person name="Andrew R.W."/>
            <person name="Ashwell R.I.S."/>
            <person name="Aubin K."/>
            <person name="Babbage A.K."/>
            <person name="Bagguley C.L."/>
            <person name="Bailey J."/>
            <person name="Beasley H."/>
            <person name="Bethel G."/>
            <person name="Bird C.P."/>
            <person name="Bray-Allen S."/>
            <person name="Brown J.Y."/>
            <person name="Brown A.J."/>
            <person name="Buckley D."/>
            <person name="Burton J."/>
            <person name="Bye J."/>
            <person name="Carder C."/>
            <person name="Chapman J.C."/>
            <person name="Clark S.Y."/>
            <person name="Clarke G."/>
            <person name="Clee C."/>
            <person name="Cobley V."/>
            <person name="Collier R.E."/>
            <person name="Corby N."/>
            <person name="Coville G.J."/>
            <person name="Davies J."/>
            <person name="Deadman R."/>
            <person name="Dunn M."/>
            <person name="Earthrowl M."/>
            <person name="Ellington A.G."/>
            <person name="Errington H."/>
            <person name="Frankish A."/>
            <person name="Frankland J."/>
            <person name="French L."/>
            <person name="Garner P."/>
            <person name="Garnett J."/>
            <person name="Gay L."/>
            <person name="Ghori M.R.J."/>
            <person name="Gibson R."/>
            <person name="Gilby L.M."/>
            <person name="Gillett W."/>
            <person name="Glithero R.J."/>
            <person name="Grafham D.V."/>
            <person name="Griffiths C."/>
            <person name="Griffiths-Jones S."/>
            <person name="Grocock R."/>
            <person name="Hammond S."/>
            <person name="Harrison E.S.I."/>
            <person name="Hart E."/>
            <person name="Haugen E."/>
            <person name="Heath P.D."/>
            <person name="Holmes S."/>
            <person name="Holt K."/>
            <person name="Howden P.J."/>
            <person name="Hunt A.R."/>
            <person name="Hunt S.E."/>
            <person name="Hunter G."/>
            <person name="Isherwood J."/>
            <person name="James R."/>
            <person name="Johnson C."/>
            <person name="Johnson D."/>
            <person name="Joy A."/>
            <person name="Kay M."/>
            <person name="Kershaw J.K."/>
            <person name="Kibukawa M."/>
            <person name="Kimberley A.M."/>
            <person name="King A."/>
            <person name="Knights A.J."/>
            <person name="Lad H."/>
            <person name="Laird G."/>
            <person name="Lawlor S."/>
            <person name="Leongamornlert D.A."/>
            <person name="Lloyd D.M."/>
            <person name="Loveland J."/>
            <person name="Lovell J."/>
            <person name="Lush M.J."/>
            <person name="Lyne R."/>
            <person name="Martin S."/>
            <person name="Mashreghi-Mohammadi M."/>
            <person name="Matthews L."/>
            <person name="Matthews N.S.W."/>
            <person name="McLaren S."/>
            <person name="Milne S."/>
            <person name="Mistry S."/>
            <person name="Moore M.J.F."/>
            <person name="Nickerson T."/>
            <person name="O'Dell C.N."/>
            <person name="Oliver K."/>
            <person name="Palmeiri A."/>
            <person name="Palmer S.A."/>
            <person name="Parker A."/>
            <person name="Patel D."/>
            <person name="Pearce A.V."/>
            <person name="Peck A.I."/>
            <person name="Pelan S."/>
            <person name="Phelps K."/>
            <person name="Phillimore B.J."/>
            <person name="Plumb R."/>
            <person name="Rajan J."/>
            <person name="Raymond C."/>
            <person name="Rouse G."/>
            <person name="Saenphimmachak C."/>
            <person name="Sehra H.K."/>
            <person name="Sheridan E."/>
            <person name="Shownkeen R."/>
            <person name="Sims S."/>
            <person name="Skuce C.D."/>
            <person name="Smith M."/>
            <person name="Steward C."/>
            <person name="Subramanian S."/>
            <person name="Sycamore N."/>
            <person name="Tracey A."/>
            <person name="Tromans A."/>
            <person name="Van Helmond Z."/>
            <person name="Wall M."/>
            <person name="Wallis J.M."/>
            <person name="White S."/>
            <person name="Whitehead S.L."/>
            <person name="Wilkinson J.E."/>
            <person name="Willey D.L."/>
            <person name="Williams H."/>
            <person name="Wilming L."/>
            <person name="Wray P.W."/>
            <person name="Wu Z."/>
            <person name="Coulson A."/>
            <person name="Vaudin M."/>
            <person name="Sulston J.E."/>
            <person name="Durbin R.M."/>
            <person name="Hubbard T."/>
            <person name="Wooster R."/>
            <person name="Dunham I."/>
            <person name="Carter N.P."/>
            <person name="McVean G."/>
            <person name="Ross M.T."/>
            <person name="Harrow J."/>
            <person name="Olson M.V."/>
            <person name="Beck S."/>
            <person name="Rogers J."/>
            <person name="Bentley D.R."/>
        </authorList>
    </citation>
    <scope>NUCLEOTIDE SEQUENCE [LARGE SCALE GENOMIC DNA]</scope>
</reference>
<reference key="6">
    <citation type="submission" date="2005-07" db="EMBL/GenBank/DDBJ databases">
        <authorList>
            <person name="Mural R.J."/>
            <person name="Istrail S."/>
            <person name="Sutton G."/>
            <person name="Florea L."/>
            <person name="Halpern A.L."/>
            <person name="Mobarry C.M."/>
            <person name="Lippert R."/>
            <person name="Walenz B."/>
            <person name="Shatkay H."/>
            <person name="Dew I."/>
            <person name="Miller J.R."/>
            <person name="Flanigan M.J."/>
            <person name="Edwards N.J."/>
            <person name="Bolanos R."/>
            <person name="Fasulo D."/>
            <person name="Halldorsson B.V."/>
            <person name="Hannenhalli S."/>
            <person name="Turner R."/>
            <person name="Yooseph S."/>
            <person name="Lu F."/>
            <person name="Nusskern D.R."/>
            <person name="Shue B.C."/>
            <person name="Zheng X.H."/>
            <person name="Zhong F."/>
            <person name="Delcher A.L."/>
            <person name="Huson D.H."/>
            <person name="Kravitz S.A."/>
            <person name="Mouchard L."/>
            <person name="Reinert K."/>
            <person name="Remington K.A."/>
            <person name="Clark A.G."/>
            <person name="Waterman M.S."/>
            <person name="Eichler E.E."/>
            <person name="Adams M.D."/>
            <person name="Hunkapiller M.W."/>
            <person name="Myers E.W."/>
            <person name="Venter J.C."/>
        </authorList>
    </citation>
    <scope>NUCLEOTIDE SEQUENCE [LARGE SCALE GENOMIC DNA]</scope>
</reference>
<reference key="7">
    <citation type="journal article" date="2004" name="Genome Res.">
        <title>The status, quality, and expansion of the NIH full-length cDNA project: the Mammalian Gene Collection (MGC).</title>
        <authorList>
            <consortium name="The MGC Project Team"/>
        </authorList>
    </citation>
    <scope>NUCLEOTIDE SEQUENCE [LARGE SCALE MRNA]</scope>
    <source>
        <tissue>Uterus</tissue>
    </source>
</reference>
<reference key="8">
    <citation type="journal article" date="1996" name="Eur. J. Biochem.">
        <title>Characterization of the human small-ribosomal-subunit proteins by N-terminal and internal sequencing, and mass spectrometry.</title>
        <authorList>
            <person name="Vladimirov S.N."/>
            <person name="Ivanov A.V."/>
            <person name="Karpova G.G."/>
            <person name="Musolyamov A.K."/>
            <person name="Egorov T.A."/>
            <person name="Thiede B."/>
            <person name="Wittmann-Liebold B."/>
            <person name="Otto A."/>
        </authorList>
    </citation>
    <scope>PROTEIN SEQUENCE OF 2-11</scope>
    <scope>IDENTIFICATION BY MASS SPECTROMETRY</scope>
    <scope>FUNCTION</scope>
</reference>
<reference key="9">
    <citation type="journal article" date="1998" name="Genome Res.">
        <title>A map of 75 human ribosomal protein genes.</title>
        <authorList>
            <person name="Kenmochi N."/>
            <person name="Kawaguchi T."/>
            <person name="Rozen S."/>
            <person name="Davis E."/>
            <person name="Goodman N."/>
            <person name="Hudson T.J."/>
            <person name="Tanaka T."/>
            <person name="Page D.C."/>
        </authorList>
    </citation>
    <scope>NUCLEOTIDE SEQUENCE [GENOMIC DNA] OF 6-74</scope>
</reference>
<reference key="10">
    <citation type="journal article" date="2003" name="Nature">
        <title>Proteomic characterization of the human centrosome by protein correlation profiling.</title>
        <authorList>
            <person name="Andersen J.S."/>
            <person name="Wilkinson C.J."/>
            <person name="Mayor T."/>
            <person name="Mortensen P."/>
            <person name="Nigg E.A."/>
            <person name="Mann M."/>
        </authorList>
    </citation>
    <scope>IDENTIFICATION BY MASS SPECTROMETRY</scope>
    <source>
        <tissue>Lymphoblast</tissue>
    </source>
</reference>
<reference key="11">
    <citation type="journal article" date="2006" name="Cell">
        <title>Global, in vivo, and site-specific phosphorylation dynamics in signaling networks.</title>
        <authorList>
            <person name="Olsen J.V."/>
            <person name="Blagoev B."/>
            <person name="Gnad F."/>
            <person name="Macek B."/>
            <person name="Kumar C."/>
            <person name="Mortensen P."/>
            <person name="Mann M."/>
        </authorList>
    </citation>
    <scope>PHOSPHORYLATION [LARGE SCALE ANALYSIS] AT SER-11</scope>
    <scope>IDENTIFICATION BY MASS SPECTROMETRY [LARGE SCALE ANALYSIS]</scope>
    <source>
        <tissue>Cervix carcinoma</tissue>
    </source>
</reference>
<reference key="12">
    <citation type="journal article" date="2008" name="Proc. Natl. Acad. Sci. U.S.A.">
        <title>A quantitative atlas of mitotic phosphorylation.</title>
        <authorList>
            <person name="Dephoure N."/>
            <person name="Zhou C."/>
            <person name="Villen J."/>
            <person name="Beausoleil S.A."/>
            <person name="Bakalarski C.E."/>
            <person name="Elledge S.J."/>
            <person name="Gygi S.P."/>
        </authorList>
    </citation>
    <scope>IDENTIFICATION BY MASS SPECTROMETRY [LARGE SCALE ANALYSIS]</scope>
    <source>
        <tissue>Cervix carcinoma</tissue>
    </source>
</reference>
<reference key="13">
    <citation type="journal article" date="2010" name="Sci. Signal.">
        <title>Quantitative phosphoproteomics reveals widespread full phosphorylation site occupancy during mitosis.</title>
        <authorList>
            <person name="Olsen J.V."/>
            <person name="Vermeulen M."/>
            <person name="Santamaria A."/>
            <person name="Kumar C."/>
            <person name="Miller M.L."/>
            <person name="Jensen L.J."/>
            <person name="Gnad F."/>
            <person name="Cox J."/>
            <person name="Jensen T.S."/>
            <person name="Nigg E.A."/>
            <person name="Brunak S."/>
            <person name="Mann M."/>
        </authorList>
    </citation>
    <scope>PHOSPHORYLATION [LARGE SCALE ANALYSIS] AT SER-11</scope>
    <scope>IDENTIFICATION BY MASS SPECTROMETRY [LARGE SCALE ANALYSIS]</scope>
    <source>
        <tissue>Cervix carcinoma</tissue>
    </source>
</reference>
<reference key="14">
    <citation type="journal article" date="2011" name="BMC Syst. Biol.">
        <title>Initial characterization of the human central proteome.</title>
        <authorList>
            <person name="Burkard T.R."/>
            <person name="Planyavsky M."/>
            <person name="Kaupe I."/>
            <person name="Breitwieser F.P."/>
            <person name="Buerckstuemmer T."/>
            <person name="Bennett K.L."/>
            <person name="Superti-Furga G."/>
            <person name="Colinge J."/>
        </authorList>
    </citation>
    <scope>IDENTIFICATION BY MASS SPECTROMETRY [LARGE SCALE ANALYSIS]</scope>
</reference>
<reference key="15">
    <citation type="journal article" date="2012" name="Proc. Natl. Acad. Sci. U.S.A.">
        <title>N-terminal acetylome analyses and functional insights of the N-terminal acetyltransferase NatB.</title>
        <authorList>
            <person name="Van Damme P."/>
            <person name="Lasa M."/>
            <person name="Polevoda B."/>
            <person name="Gazquez C."/>
            <person name="Elosegui-Artola A."/>
            <person name="Kim D.S."/>
            <person name="De Juan-Pardo E."/>
            <person name="Demeyer K."/>
            <person name="Hole K."/>
            <person name="Larrea E."/>
            <person name="Timmerman E."/>
            <person name="Prieto J."/>
            <person name="Arnesen T."/>
            <person name="Sherman F."/>
            <person name="Gevaert K."/>
            <person name="Aldabe R."/>
        </authorList>
    </citation>
    <scope>IDENTIFICATION BY MASS SPECTROMETRY [LARGE SCALE ANALYSIS]</scope>
</reference>
<reference key="16">
    <citation type="journal article" date="2013" name="J. Proteome Res.">
        <title>Toward a comprehensive characterization of a human cancer cell phosphoproteome.</title>
        <authorList>
            <person name="Zhou H."/>
            <person name="Di Palma S."/>
            <person name="Preisinger C."/>
            <person name="Peng M."/>
            <person name="Polat A.N."/>
            <person name="Heck A.J."/>
            <person name="Mohammed S."/>
        </authorList>
    </citation>
    <scope>PHOSPHORYLATION [LARGE SCALE ANALYSIS] AT SER-11</scope>
    <scope>IDENTIFICATION BY MASS SPECTROMETRY [LARGE SCALE ANALYSIS]</scope>
    <source>
        <tissue>Cervix carcinoma</tissue>
        <tissue>Erythroleukemia</tissue>
    </source>
</reference>
<reference key="17">
    <citation type="journal article" date="2014" name="Curr. Opin. Struct. Biol.">
        <title>A new system for naming ribosomal proteins.</title>
        <authorList>
            <person name="Ban N."/>
            <person name="Beckmann R."/>
            <person name="Cate J.H.D."/>
            <person name="Dinman J.D."/>
            <person name="Dragon F."/>
            <person name="Ellis S.R."/>
            <person name="Lafontaine D.L.J."/>
            <person name="Lindahl L."/>
            <person name="Liljas A."/>
            <person name="Lipton J.M."/>
            <person name="McAlear M.A."/>
            <person name="Moore P.B."/>
            <person name="Noller H.F."/>
            <person name="Ortega J."/>
            <person name="Panse V.G."/>
            <person name="Ramakrishnan V."/>
            <person name="Spahn C.M.T."/>
            <person name="Steitz T.A."/>
            <person name="Tchorzewski M."/>
            <person name="Tollervey D."/>
            <person name="Warren A.J."/>
            <person name="Williamson J.R."/>
            <person name="Wilson D."/>
            <person name="Yonath A."/>
            <person name="Yusupov M."/>
        </authorList>
    </citation>
    <scope>NOMENCLATURE</scope>
</reference>
<reference key="18">
    <citation type="journal article" date="2014" name="J. Proteomics">
        <title>An enzyme assisted RP-RPLC approach for in-depth analysis of human liver phosphoproteome.</title>
        <authorList>
            <person name="Bian Y."/>
            <person name="Song C."/>
            <person name="Cheng K."/>
            <person name="Dong M."/>
            <person name="Wang F."/>
            <person name="Huang J."/>
            <person name="Sun D."/>
            <person name="Wang L."/>
            <person name="Ye M."/>
            <person name="Zou H."/>
        </authorList>
    </citation>
    <scope>IDENTIFICATION BY MASS SPECTROMETRY [LARGE SCALE ANALYSIS]</scope>
    <source>
        <tissue>Liver</tissue>
    </source>
</reference>
<reference key="19">
    <citation type="journal article" date="2015" name="Br. J. Haematol.">
        <title>Loss of function mutations in RPL27 and RPS27 identified by whole-exome sequencing in Diamond-Blackfan anaemia.</title>
        <authorList>
            <person name="Wang R."/>
            <person name="Yoshida K."/>
            <person name="Toki T."/>
            <person name="Sawada T."/>
            <person name="Uechi T."/>
            <person name="Okuno Y."/>
            <person name="Sato-Otsubo A."/>
            <person name="Kudo K."/>
            <person name="Kamimaki I."/>
            <person name="Kanezaki R."/>
            <person name="Shiraishi Y."/>
            <person name="Chiba K."/>
            <person name="Tanaka H."/>
            <person name="Terui K."/>
            <person name="Sato T."/>
            <person name="Iribe Y."/>
            <person name="Ohga S."/>
            <person name="Kuramitsu M."/>
            <person name="Hamaguchi I."/>
            <person name="Ohara A."/>
            <person name="Hara J."/>
            <person name="Goi K."/>
            <person name="Matsubara K."/>
            <person name="Koike K."/>
            <person name="Ishiguro A."/>
            <person name="Okamoto Y."/>
            <person name="Watanabe K."/>
            <person name="Kanno H."/>
            <person name="Kojima S."/>
            <person name="Miyano S."/>
            <person name="Kenmochi N."/>
            <person name="Ogawa S."/>
            <person name="Ito E."/>
        </authorList>
    </citation>
    <scope>FUNCTION</scope>
    <scope>INVOLVEMENT IN DBA17</scope>
</reference>
<reference key="20">
    <citation type="journal article" date="2013" name="Nature">
        <title>Structures of the human and Drosophila 80S ribosome.</title>
        <authorList>
            <person name="Anger A.M."/>
            <person name="Armache J.P."/>
            <person name="Berninghausen O."/>
            <person name="Habeck M."/>
            <person name="Subklewe M."/>
            <person name="Wilson D.N."/>
            <person name="Beckmann R."/>
        </authorList>
    </citation>
    <scope>STRUCTURE BY ELECTRON MICROSCOPY (5.0 ANGSTROMS) OF 80S RIBOSOME</scope>
    <scope>FUNCTION</scope>
    <scope>SUBUNIT</scope>
    <scope>SUBCELLULAR LOCATION</scope>
</reference>
<reference evidence="13 14 15" key="21">
    <citation type="journal article" date="2021" name="Science">
        <title>Nucleolar maturation of the human small subunit processome.</title>
        <authorList>
            <person name="Singh S."/>
            <person name="Vanden Broeck A."/>
            <person name="Miller L."/>
            <person name="Chaker-Margot M."/>
            <person name="Klinge S."/>
        </authorList>
    </citation>
    <scope>STRUCTURE BY ELECTRON MICROSCOPY (2.70 ANGSTROMS)</scope>
    <scope>FUNCTION</scope>
    <scope>SUBUNIT</scope>
    <scope>SUBCELLULAR LOCATION</scope>
</reference>
<sequence length="84" mass="9461">MPLAKDLLHPSPEEEKRKHKKKRLVQSPNSYFMDVKCPGCYKITTVFSHAQTVVLCVGCSTVLCQPTGGKARLTEGCSFRRKQH</sequence>